<comment type="function">
    <text evidence="1">Catalyzes the attachment of glutamate to tRNA(Glu) in a two-step reaction: glutamate is first activated by ATP to form Glu-AMP and then transferred to the acceptor end of tRNA(Glu).</text>
</comment>
<comment type="catalytic activity">
    <reaction evidence="1">
        <text>tRNA(Glu) + L-glutamate + ATP = L-glutamyl-tRNA(Glu) + AMP + diphosphate</text>
        <dbReference type="Rhea" id="RHEA:23540"/>
        <dbReference type="Rhea" id="RHEA-COMP:9663"/>
        <dbReference type="Rhea" id="RHEA-COMP:9680"/>
        <dbReference type="ChEBI" id="CHEBI:29985"/>
        <dbReference type="ChEBI" id="CHEBI:30616"/>
        <dbReference type="ChEBI" id="CHEBI:33019"/>
        <dbReference type="ChEBI" id="CHEBI:78442"/>
        <dbReference type="ChEBI" id="CHEBI:78520"/>
        <dbReference type="ChEBI" id="CHEBI:456215"/>
        <dbReference type="EC" id="6.1.1.17"/>
    </reaction>
</comment>
<comment type="cofactor">
    <cofactor evidence="1">
        <name>Zn(2+)</name>
        <dbReference type="ChEBI" id="CHEBI:29105"/>
    </cofactor>
    <text evidence="1">Binds 1 zinc ion per subunit.</text>
</comment>
<comment type="subunit">
    <text evidence="1">Monomer.</text>
</comment>
<comment type="subcellular location">
    <subcellularLocation>
        <location evidence="1">Cytoplasm</location>
    </subcellularLocation>
</comment>
<comment type="similarity">
    <text evidence="1">Belongs to the class-I aminoacyl-tRNA synthetase family. Glutamate--tRNA ligase type 1 subfamily.</text>
</comment>
<gene>
    <name evidence="1" type="primary">gltX</name>
    <name type="ordered locus">BPUM_0077</name>
</gene>
<name>SYE_BACP2</name>
<organism>
    <name type="scientific">Bacillus pumilus (strain SAFR-032)</name>
    <dbReference type="NCBI Taxonomy" id="315750"/>
    <lineage>
        <taxon>Bacteria</taxon>
        <taxon>Bacillati</taxon>
        <taxon>Bacillota</taxon>
        <taxon>Bacilli</taxon>
        <taxon>Bacillales</taxon>
        <taxon>Bacillaceae</taxon>
        <taxon>Bacillus</taxon>
    </lineage>
</organism>
<reference key="1">
    <citation type="journal article" date="2007" name="PLoS ONE">
        <title>Paradoxical DNA repair and peroxide resistance gene conservation in Bacillus pumilus SAFR-032.</title>
        <authorList>
            <person name="Gioia J."/>
            <person name="Yerrapragada S."/>
            <person name="Qin X."/>
            <person name="Jiang H."/>
            <person name="Igboeli O.C."/>
            <person name="Muzny D."/>
            <person name="Dugan-Rocha S."/>
            <person name="Ding Y."/>
            <person name="Hawes A."/>
            <person name="Liu W."/>
            <person name="Perez L."/>
            <person name="Kovar C."/>
            <person name="Dinh H."/>
            <person name="Lee S."/>
            <person name="Nazareth L."/>
            <person name="Blyth P."/>
            <person name="Holder M."/>
            <person name="Buhay C."/>
            <person name="Tirumalai M.R."/>
            <person name="Liu Y."/>
            <person name="Dasgupta I."/>
            <person name="Bokhetache L."/>
            <person name="Fujita M."/>
            <person name="Karouia F."/>
            <person name="Eswara Moorthy P."/>
            <person name="Siefert J."/>
            <person name="Uzman A."/>
            <person name="Buzumbo P."/>
            <person name="Verma A."/>
            <person name="Zwiya H."/>
            <person name="McWilliams B.D."/>
            <person name="Olowu A."/>
            <person name="Clinkenbeard K.D."/>
            <person name="Newcombe D."/>
            <person name="Golebiewski L."/>
            <person name="Petrosino J.F."/>
            <person name="Nicholson W.L."/>
            <person name="Fox G.E."/>
            <person name="Venkateswaran K."/>
            <person name="Highlander S.K."/>
            <person name="Weinstock G.M."/>
        </authorList>
    </citation>
    <scope>NUCLEOTIDE SEQUENCE [LARGE SCALE GENOMIC DNA]</scope>
    <source>
        <strain>SAFR-032</strain>
    </source>
</reference>
<protein>
    <recommendedName>
        <fullName evidence="1">Glutamate--tRNA ligase</fullName>
        <ecNumber evidence="1">6.1.1.17</ecNumber>
    </recommendedName>
    <alternativeName>
        <fullName evidence="1">Glutamyl-tRNA synthetase</fullName>
        <shortName evidence="1">GluRS</shortName>
    </alternativeName>
</protein>
<accession>A8F960</accession>
<keyword id="KW-0030">Aminoacyl-tRNA synthetase</keyword>
<keyword id="KW-0067">ATP-binding</keyword>
<keyword id="KW-0963">Cytoplasm</keyword>
<keyword id="KW-0436">Ligase</keyword>
<keyword id="KW-0479">Metal-binding</keyword>
<keyword id="KW-0547">Nucleotide-binding</keyword>
<keyword id="KW-0648">Protein biosynthesis</keyword>
<keyword id="KW-0862">Zinc</keyword>
<sequence>MGNEVRVRYAPSPTGHLHIGNARTALFNYLFARSQGGKFIIRIEDTDQKRNVEGGEESQLRHLQWLGIDWDESIDKDGGYGPYRQSERNDIYKKYYDELLEKDLAYKCYCTAEELEEEREAQIARSEMPRYSGKCSHLSKEEEDKLIAEGREPSIRFRVPKGEIIKFDDMVKGEISFETDGIGDFVIVKKDGTPTYNFAVAVDDHLMKMTHILRGEDHISNTPKQIMIFNAFGWDVPLFGHMTLIVNENRKKLSKRDESIIQFIEQYKNLGYLPEALFNFIALLGWSPVGEEELFTKEQFIDIFDVNRLSKSPALFDMHKLKWVNNQYVKALDLDQVVALTLPHLQKAGKVSEQLSDEKNTWVRKLIALYHEQLSYGAEIVELTELFFKEQIEYNQEAKEVLAEEQVPEVMASFAGQLERLESFTPDEIKAAIKAVQKETGHKGKKLFMPIRVAVTGQTHGPELPQSIELLGKETVLNRIKQI</sequence>
<evidence type="ECO:0000255" key="1">
    <source>
        <dbReference type="HAMAP-Rule" id="MF_00022"/>
    </source>
</evidence>
<proteinExistence type="inferred from homology"/>
<feature type="chain" id="PRO_1000057191" description="Glutamate--tRNA ligase">
    <location>
        <begin position="1"/>
        <end position="483"/>
    </location>
</feature>
<feature type="short sequence motif" description="'HIGH' region" evidence="1">
    <location>
        <begin position="11"/>
        <end position="21"/>
    </location>
</feature>
<feature type="short sequence motif" description="'KMSKS' region" evidence="1">
    <location>
        <begin position="252"/>
        <end position="256"/>
    </location>
</feature>
<feature type="binding site" evidence="1">
    <location>
        <position position="108"/>
    </location>
    <ligand>
        <name>Zn(2+)</name>
        <dbReference type="ChEBI" id="CHEBI:29105"/>
    </ligand>
</feature>
<feature type="binding site" evidence="1">
    <location>
        <position position="110"/>
    </location>
    <ligand>
        <name>Zn(2+)</name>
        <dbReference type="ChEBI" id="CHEBI:29105"/>
    </ligand>
</feature>
<feature type="binding site" evidence="1">
    <location>
        <position position="135"/>
    </location>
    <ligand>
        <name>Zn(2+)</name>
        <dbReference type="ChEBI" id="CHEBI:29105"/>
    </ligand>
</feature>
<feature type="binding site" evidence="1">
    <location>
        <position position="137"/>
    </location>
    <ligand>
        <name>Zn(2+)</name>
        <dbReference type="ChEBI" id="CHEBI:29105"/>
    </ligand>
</feature>
<feature type="binding site" evidence="1">
    <location>
        <position position="255"/>
    </location>
    <ligand>
        <name>ATP</name>
        <dbReference type="ChEBI" id="CHEBI:30616"/>
    </ligand>
</feature>
<dbReference type="EC" id="6.1.1.17" evidence="1"/>
<dbReference type="EMBL" id="CP000813">
    <property type="protein sequence ID" value="ABV60777.1"/>
    <property type="molecule type" value="Genomic_DNA"/>
</dbReference>
<dbReference type="RefSeq" id="WP_012008690.1">
    <property type="nucleotide sequence ID" value="NZ_VEIS01000020.1"/>
</dbReference>
<dbReference type="SMR" id="A8F960"/>
<dbReference type="STRING" id="315750.BPUM_0077"/>
<dbReference type="GeneID" id="5619321"/>
<dbReference type="KEGG" id="bpu:BPUM_0077"/>
<dbReference type="eggNOG" id="COG0008">
    <property type="taxonomic scope" value="Bacteria"/>
</dbReference>
<dbReference type="HOGENOM" id="CLU_015768_6_1_9"/>
<dbReference type="OrthoDB" id="9807503at2"/>
<dbReference type="Proteomes" id="UP000001355">
    <property type="component" value="Chromosome"/>
</dbReference>
<dbReference type="GO" id="GO:0005829">
    <property type="term" value="C:cytosol"/>
    <property type="evidence" value="ECO:0007669"/>
    <property type="project" value="TreeGrafter"/>
</dbReference>
<dbReference type="GO" id="GO:0005524">
    <property type="term" value="F:ATP binding"/>
    <property type="evidence" value="ECO:0007669"/>
    <property type="project" value="UniProtKB-UniRule"/>
</dbReference>
<dbReference type="GO" id="GO:0004818">
    <property type="term" value="F:glutamate-tRNA ligase activity"/>
    <property type="evidence" value="ECO:0007669"/>
    <property type="project" value="UniProtKB-UniRule"/>
</dbReference>
<dbReference type="GO" id="GO:0000049">
    <property type="term" value="F:tRNA binding"/>
    <property type="evidence" value="ECO:0007669"/>
    <property type="project" value="InterPro"/>
</dbReference>
<dbReference type="GO" id="GO:0008270">
    <property type="term" value="F:zinc ion binding"/>
    <property type="evidence" value="ECO:0007669"/>
    <property type="project" value="UniProtKB-UniRule"/>
</dbReference>
<dbReference type="GO" id="GO:0006424">
    <property type="term" value="P:glutamyl-tRNA aminoacylation"/>
    <property type="evidence" value="ECO:0007669"/>
    <property type="project" value="UniProtKB-UniRule"/>
</dbReference>
<dbReference type="CDD" id="cd00808">
    <property type="entry name" value="GluRS_core"/>
    <property type="match status" value="1"/>
</dbReference>
<dbReference type="FunFam" id="1.10.10.350:FF:000002">
    <property type="entry name" value="Glutamate--tRNA ligase"/>
    <property type="match status" value="1"/>
</dbReference>
<dbReference type="FunFam" id="3.40.50.620:FF:000007">
    <property type="entry name" value="Glutamate--tRNA ligase"/>
    <property type="match status" value="1"/>
</dbReference>
<dbReference type="Gene3D" id="1.10.10.350">
    <property type="match status" value="1"/>
</dbReference>
<dbReference type="Gene3D" id="3.40.50.620">
    <property type="entry name" value="HUPs"/>
    <property type="match status" value="1"/>
</dbReference>
<dbReference type="HAMAP" id="MF_00022">
    <property type="entry name" value="Glu_tRNA_synth_type1"/>
    <property type="match status" value="1"/>
</dbReference>
<dbReference type="InterPro" id="IPR045462">
    <property type="entry name" value="aa-tRNA-synth_I_cd-bd"/>
</dbReference>
<dbReference type="InterPro" id="IPR020751">
    <property type="entry name" value="aa-tRNA-synth_I_codon-bd_sub2"/>
</dbReference>
<dbReference type="InterPro" id="IPR001412">
    <property type="entry name" value="aa-tRNA-synth_I_CS"/>
</dbReference>
<dbReference type="InterPro" id="IPR008925">
    <property type="entry name" value="aa_tRNA-synth_I_cd-bd_sf"/>
</dbReference>
<dbReference type="InterPro" id="IPR004527">
    <property type="entry name" value="Glu-tRNA-ligase_bac/mito"/>
</dbReference>
<dbReference type="InterPro" id="IPR000924">
    <property type="entry name" value="Glu/Gln-tRNA-synth"/>
</dbReference>
<dbReference type="InterPro" id="IPR020058">
    <property type="entry name" value="Glu/Gln-tRNA-synth_Ib_cat-dom"/>
</dbReference>
<dbReference type="InterPro" id="IPR049940">
    <property type="entry name" value="GluQ/Sye"/>
</dbReference>
<dbReference type="InterPro" id="IPR033910">
    <property type="entry name" value="GluRS_core"/>
</dbReference>
<dbReference type="InterPro" id="IPR014729">
    <property type="entry name" value="Rossmann-like_a/b/a_fold"/>
</dbReference>
<dbReference type="NCBIfam" id="TIGR00464">
    <property type="entry name" value="gltX_bact"/>
    <property type="match status" value="1"/>
</dbReference>
<dbReference type="PANTHER" id="PTHR43311">
    <property type="entry name" value="GLUTAMATE--TRNA LIGASE"/>
    <property type="match status" value="1"/>
</dbReference>
<dbReference type="PANTHER" id="PTHR43311:SF2">
    <property type="entry name" value="GLUTAMATE--TRNA LIGASE, MITOCHONDRIAL-RELATED"/>
    <property type="match status" value="1"/>
</dbReference>
<dbReference type="Pfam" id="PF19269">
    <property type="entry name" value="Anticodon_2"/>
    <property type="match status" value="1"/>
</dbReference>
<dbReference type="Pfam" id="PF00749">
    <property type="entry name" value="tRNA-synt_1c"/>
    <property type="match status" value="1"/>
</dbReference>
<dbReference type="PRINTS" id="PR00987">
    <property type="entry name" value="TRNASYNTHGLU"/>
</dbReference>
<dbReference type="SUPFAM" id="SSF48163">
    <property type="entry name" value="An anticodon-binding domain of class I aminoacyl-tRNA synthetases"/>
    <property type="match status" value="1"/>
</dbReference>
<dbReference type="SUPFAM" id="SSF52374">
    <property type="entry name" value="Nucleotidylyl transferase"/>
    <property type="match status" value="1"/>
</dbReference>
<dbReference type="PROSITE" id="PS00178">
    <property type="entry name" value="AA_TRNA_LIGASE_I"/>
    <property type="match status" value="1"/>
</dbReference>